<feature type="chain" id="PRO_1000072570" description="Quinolinate synthase">
    <location>
        <begin position="1"/>
        <end position="353"/>
    </location>
</feature>
<feature type="binding site" evidence="1">
    <location>
        <position position="47"/>
    </location>
    <ligand>
        <name>iminosuccinate</name>
        <dbReference type="ChEBI" id="CHEBI:77875"/>
    </ligand>
</feature>
<feature type="binding site" evidence="1">
    <location>
        <position position="68"/>
    </location>
    <ligand>
        <name>iminosuccinate</name>
        <dbReference type="ChEBI" id="CHEBI:77875"/>
    </ligand>
</feature>
<feature type="binding site" evidence="1">
    <location>
        <position position="113"/>
    </location>
    <ligand>
        <name>[4Fe-4S] cluster</name>
        <dbReference type="ChEBI" id="CHEBI:49883"/>
    </ligand>
</feature>
<feature type="binding site" evidence="1">
    <location>
        <begin position="139"/>
        <end position="141"/>
    </location>
    <ligand>
        <name>iminosuccinate</name>
        <dbReference type="ChEBI" id="CHEBI:77875"/>
    </ligand>
</feature>
<feature type="binding site" evidence="1">
    <location>
        <position position="156"/>
    </location>
    <ligand>
        <name>iminosuccinate</name>
        <dbReference type="ChEBI" id="CHEBI:77875"/>
    </ligand>
</feature>
<feature type="binding site" evidence="1">
    <location>
        <position position="200"/>
    </location>
    <ligand>
        <name>[4Fe-4S] cluster</name>
        <dbReference type="ChEBI" id="CHEBI:49883"/>
    </ligand>
</feature>
<feature type="binding site" evidence="1">
    <location>
        <begin position="226"/>
        <end position="228"/>
    </location>
    <ligand>
        <name>iminosuccinate</name>
        <dbReference type="ChEBI" id="CHEBI:77875"/>
    </ligand>
</feature>
<feature type="binding site" evidence="1">
    <location>
        <position position="243"/>
    </location>
    <ligand>
        <name>iminosuccinate</name>
        <dbReference type="ChEBI" id="CHEBI:77875"/>
    </ligand>
</feature>
<feature type="binding site" evidence="1">
    <location>
        <position position="297"/>
    </location>
    <ligand>
        <name>[4Fe-4S] cluster</name>
        <dbReference type="ChEBI" id="CHEBI:49883"/>
    </ligand>
</feature>
<protein>
    <recommendedName>
        <fullName evidence="1">Quinolinate synthase</fullName>
        <ecNumber evidence="1">2.5.1.72</ecNumber>
    </recommendedName>
</protein>
<accession>A5F769</accession>
<accession>C3M1M6</accession>
<evidence type="ECO:0000255" key="1">
    <source>
        <dbReference type="HAMAP-Rule" id="MF_00567"/>
    </source>
</evidence>
<sequence>MSHILDTINTVYPFPPKPIPLRDEEKQAYIAEIKQLLIEKDAVLIAHYYTDPEIQALAESTGGFVGDSLEMAKFGNRYPATTLIIAGVRFMGESAKILTPEKRILMPTLEAECSLDLGCPADKFTEFCDAHPDHTVVVYANTSAAVKARADWVVTSSIALEIVEHLDSEGKPIIWGPDRHLGAYIAKKTGADMLLWQGECVVHDEFSADALRKMKALYPDAAILVHPESPASVVELADAVGSTSQLIKAAKTLPQQKMIVATDKGIFFKMQQMVPEKELIEAPTAGAGATCRSCAHCPWMAMNGLQAIAQALREGGKQHEIFVDEALRVKSLIPLNRMLDFAEQLNLKVKGNA</sequence>
<comment type="function">
    <text evidence="1">Catalyzes the condensation of iminoaspartate with dihydroxyacetone phosphate to form quinolinate.</text>
</comment>
<comment type="catalytic activity">
    <reaction evidence="1">
        <text>iminosuccinate + dihydroxyacetone phosphate = quinolinate + phosphate + 2 H2O + H(+)</text>
        <dbReference type="Rhea" id="RHEA:25888"/>
        <dbReference type="ChEBI" id="CHEBI:15377"/>
        <dbReference type="ChEBI" id="CHEBI:15378"/>
        <dbReference type="ChEBI" id="CHEBI:29959"/>
        <dbReference type="ChEBI" id="CHEBI:43474"/>
        <dbReference type="ChEBI" id="CHEBI:57642"/>
        <dbReference type="ChEBI" id="CHEBI:77875"/>
        <dbReference type="EC" id="2.5.1.72"/>
    </reaction>
    <physiologicalReaction direction="left-to-right" evidence="1">
        <dbReference type="Rhea" id="RHEA:25889"/>
    </physiologicalReaction>
</comment>
<comment type="cofactor">
    <cofactor evidence="1">
        <name>[4Fe-4S] cluster</name>
        <dbReference type="ChEBI" id="CHEBI:49883"/>
    </cofactor>
    <text evidence="1">Binds 1 [4Fe-4S] cluster per subunit.</text>
</comment>
<comment type="pathway">
    <text evidence="1">Cofactor biosynthesis; NAD(+) biosynthesis; quinolinate from iminoaspartate: step 1/1.</text>
</comment>
<comment type="subcellular location">
    <subcellularLocation>
        <location evidence="1">Cytoplasm</location>
    </subcellularLocation>
</comment>
<comment type="similarity">
    <text evidence="1">Belongs to the quinolinate synthase family. Type 1 subfamily.</text>
</comment>
<reference key="1">
    <citation type="submission" date="2007-03" db="EMBL/GenBank/DDBJ databases">
        <authorList>
            <person name="Heidelberg J."/>
        </authorList>
    </citation>
    <scope>NUCLEOTIDE SEQUENCE [LARGE SCALE GENOMIC DNA]</scope>
    <source>
        <strain>ATCC 39541 / Classical Ogawa 395 / O395</strain>
    </source>
</reference>
<reference key="2">
    <citation type="journal article" date="2008" name="PLoS ONE">
        <title>A recalibrated molecular clock and independent origins for the cholera pandemic clones.</title>
        <authorList>
            <person name="Feng L."/>
            <person name="Reeves P.R."/>
            <person name="Lan R."/>
            <person name="Ren Y."/>
            <person name="Gao C."/>
            <person name="Zhou Z."/>
            <person name="Ren Y."/>
            <person name="Cheng J."/>
            <person name="Wang W."/>
            <person name="Wang J."/>
            <person name="Qian W."/>
            <person name="Li D."/>
            <person name="Wang L."/>
        </authorList>
    </citation>
    <scope>NUCLEOTIDE SEQUENCE [LARGE SCALE GENOMIC DNA]</scope>
    <source>
        <strain>ATCC 39541 / Classical Ogawa 395 / O395</strain>
    </source>
</reference>
<keyword id="KW-0004">4Fe-4S</keyword>
<keyword id="KW-0963">Cytoplasm</keyword>
<keyword id="KW-0408">Iron</keyword>
<keyword id="KW-0411">Iron-sulfur</keyword>
<keyword id="KW-0479">Metal-binding</keyword>
<keyword id="KW-0662">Pyridine nucleotide biosynthesis</keyword>
<keyword id="KW-0808">Transferase</keyword>
<dbReference type="EC" id="2.5.1.72" evidence="1"/>
<dbReference type="EMBL" id="CP000627">
    <property type="protein sequence ID" value="ABQ20664.1"/>
    <property type="molecule type" value="Genomic_DNA"/>
</dbReference>
<dbReference type="EMBL" id="CP001235">
    <property type="protein sequence ID" value="ACP09942.1"/>
    <property type="molecule type" value="Genomic_DNA"/>
</dbReference>
<dbReference type="RefSeq" id="WP_000018291.1">
    <property type="nucleotide sequence ID" value="NZ_JAACZH010000001.1"/>
</dbReference>
<dbReference type="SMR" id="A5F769"/>
<dbReference type="KEGG" id="vco:VC0395_A1426"/>
<dbReference type="KEGG" id="vcr:VC395_1948"/>
<dbReference type="PATRIC" id="fig|345073.21.peg.1882"/>
<dbReference type="eggNOG" id="COG0379">
    <property type="taxonomic scope" value="Bacteria"/>
</dbReference>
<dbReference type="HOGENOM" id="CLU_047382_1_0_6"/>
<dbReference type="OrthoDB" id="9801204at2"/>
<dbReference type="UniPathway" id="UPA00253">
    <property type="reaction ID" value="UER00327"/>
</dbReference>
<dbReference type="Proteomes" id="UP000000249">
    <property type="component" value="Chromosome 2"/>
</dbReference>
<dbReference type="GO" id="GO:0005829">
    <property type="term" value="C:cytosol"/>
    <property type="evidence" value="ECO:0007669"/>
    <property type="project" value="TreeGrafter"/>
</dbReference>
<dbReference type="GO" id="GO:0051539">
    <property type="term" value="F:4 iron, 4 sulfur cluster binding"/>
    <property type="evidence" value="ECO:0007669"/>
    <property type="project" value="UniProtKB-KW"/>
</dbReference>
<dbReference type="GO" id="GO:0046872">
    <property type="term" value="F:metal ion binding"/>
    <property type="evidence" value="ECO:0007669"/>
    <property type="project" value="UniProtKB-KW"/>
</dbReference>
<dbReference type="GO" id="GO:0008987">
    <property type="term" value="F:quinolinate synthetase A activity"/>
    <property type="evidence" value="ECO:0007669"/>
    <property type="project" value="UniProtKB-UniRule"/>
</dbReference>
<dbReference type="GO" id="GO:0034628">
    <property type="term" value="P:'de novo' NAD biosynthetic process from L-aspartate"/>
    <property type="evidence" value="ECO:0007669"/>
    <property type="project" value="TreeGrafter"/>
</dbReference>
<dbReference type="FunFam" id="3.40.50.10800:FF:000001">
    <property type="entry name" value="Quinolinate synthase A"/>
    <property type="match status" value="1"/>
</dbReference>
<dbReference type="FunFam" id="3.40.50.10800:FF:000003">
    <property type="entry name" value="Quinolinate synthase A"/>
    <property type="match status" value="1"/>
</dbReference>
<dbReference type="Gene3D" id="3.40.50.10800">
    <property type="entry name" value="NadA-like"/>
    <property type="match status" value="3"/>
</dbReference>
<dbReference type="HAMAP" id="MF_00567">
    <property type="entry name" value="NadA_type1"/>
    <property type="match status" value="1"/>
</dbReference>
<dbReference type="InterPro" id="IPR003473">
    <property type="entry name" value="NadA"/>
</dbReference>
<dbReference type="InterPro" id="IPR036094">
    <property type="entry name" value="NadA_sf"/>
</dbReference>
<dbReference type="InterPro" id="IPR023513">
    <property type="entry name" value="Quinolinate_synth_A_type1"/>
</dbReference>
<dbReference type="NCBIfam" id="TIGR00550">
    <property type="entry name" value="nadA"/>
    <property type="match status" value="1"/>
</dbReference>
<dbReference type="NCBIfam" id="NF006877">
    <property type="entry name" value="PRK09375.1-1"/>
    <property type="match status" value="1"/>
</dbReference>
<dbReference type="NCBIfam" id="NF006878">
    <property type="entry name" value="PRK09375.1-2"/>
    <property type="match status" value="1"/>
</dbReference>
<dbReference type="PANTHER" id="PTHR30573:SF0">
    <property type="entry name" value="QUINOLINATE SYNTHASE, CHLOROPLASTIC"/>
    <property type="match status" value="1"/>
</dbReference>
<dbReference type="PANTHER" id="PTHR30573">
    <property type="entry name" value="QUINOLINATE SYNTHETASE A"/>
    <property type="match status" value="1"/>
</dbReference>
<dbReference type="Pfam" id="PF02445">
    <property type="entry name" value="NadA"/>
    <property type="match status" value="1"/>
</dbReference>
<dbReference type="SUPFAM" id="SSF142754">
    <property type="entry name" value="NadA-like"/>
    <property type="match status" value="1"/>
</dbReference>
<name>NADA_VIBC3</name>
<proteinExistence type="inferred from homology"/>
<organism>
    <name type="scientific">Vibrio cholerae serotype O1 (strain ATCC 39541 / Classical Ogawa 395 / O395)</name>
    <dbReference type="NCBI Taxonomy" id="345073"/>
    <lineage>
        <taxon>Bacteria</taxon>
        <taxon>Pseudomonadati</taxon>
        <taxon>Pseudomonadota</taxon>
        <taxon>Gammaproteobacteria</taxon>
        <taxon>Vibrionales</taxon>
        <taxon>Vibrionaceae</taxon>
        <taxon>Vibrio</taxon>
    </lineage>
</organism>
<gene>
    <name evidence="1" type="primary">nadA</name>
    <name type="ordered locus">VC0395_A1426</name>
    <name type="ordered locus">VC395_1948</name>
</gene>